<gene>
    <name type="primary">OPG103</name>
    <name type="synonym">RPO22</name>
    <name type="ordered locus">FPV135</name>
</gene>
<protein>
    <recommendedName>
        <fullName>DNA-directed RNA polymerase 22 kDa subunit</fullName>
        <ecNumber>2.7.7.6</ecNumber>
    </recommendedName>
</protein>
<keyword id="KW-0240">DNA-directed RNA polymerase</keyword>
<keyword id="KW-0548">Nucleotidyltransferase</keyword>
<keyword id="KW-1185">Reference proteome</keyword>
<keyword id="KW-0804">Transcription</keyword>
<keyword id="KW-0808">Transferase</keyword>
<keyword id="KW-0946">Virion</keyword>
<organismHost>
    <name type="scientific">Vertebrata</name>
    <dbReference type="NCBI Taxonomy" id="7742"/>
</organismHost>
<reference key="1">
    <citation type="journal article" date="1987" name="Virology">
        <title>Similar genetic organization between a region of fowlpox virus DNA and the vaccinia virus HindIII J fragment despite divergent location of the thymidine kinase gene.</title>
        <authorList>
            <person name="Drillien R."/>
            <person name="Spehner D."/>
            <person name="Villeval D."/>
            <person name="Lecocq J.-P."/>
        </authorList>
    </citation>
    <scope>NUCLEOTIDE SEQUENCE [GENOMIC DNA]</scope>
    <source>
        <strain>Salisbury</strain>
    </source>
</reference>
<reference key="2">
    <citation type="journal article" date="2000" name="J. Virol.">
        <title>The genome of fowlpox virus.</title>
        <authorList>
            <person name="Afonso C.L."/>
            <person name="Tulman E.R."/>
            <person name="Lu Z."/>
            <person name="Zsak L."/>
            <person name="Kutish G.F."/>
            <person name="Rock D.L."/>
        </authorList>
    </citation>
    <scope>NUCLEOTIDE SEQUENCE [LARGE SCALE GENOMIC DNA]</scope>
</reference>
<sequence length="186" mass="21800">MMNQYNVTYLSKILCLKTEILYKPFSIINRSIVNQYNIDVKYDDITSIVKIRHKTENTILVFQIFNESNVKYSPIEYDYGDPIIITSNLQHGHNRIPINMLYIDVVESDMFPTFSRLDSETIKIITSILQSDNKKEQSIKLPKVSENELSVKILYHKDYPLKYVRYYKNNMVTGIEVIDRSVAITS</sequence>
<name>RP22_FOWPN</name>
<dbReference type="EC" id="2.7.7.6"/>
<dbReference type="EMBL" id="M17418">
    <property type="protein sequence ID" value="AAA66423.1"/>
    <property type="molecule type" value="Genomic_DNA"/>
</dbReference>
<dbReference type="EMBL" id="AF198100">
    <property type="protein sequence ID" value="AAF44479.1"/>
    <property type="molecule type" value="Genomic_DNA"/>
</dbReference>
<dbReference type="RefSeq" id="NP_039098.1">
    <property type="nucleotide sequence ID" value="NC_002188.1"/>
</dbReference>
<dbReference type="SMR" id="Q85280"/>
<dbReference type="GeneID" id="1486683"/>
<dbReference type="KEGG" id="vg:1486683"/>
<dbReference type="Proteomes" id="UP000008597">
    <property type="component" value="Segment"/>
</dbReference>
<dbReference type="GO" id="GO:0000428">
    <property type="term" value="C:DNA-directed RNA polymerase complex"/>
    <property type="evidence" value="ECO:0007669"/>
    <property type="project" value="UniProtKB-KW"/>
</dbReference>
<dbReference type="GO" id="GO:0044423">
    <property type="term" value="C:virion component"/>
    <property type="evidence" value="ECO:0007669"/>
    <property type="project" value="UniProtKB-KW"/>
</dbReference>
<dbReference type="GO" id="GO:0003677">
    <property type="term" value="F:DNA binding"/>
    <property type="evidence" value="ECO:0007669"/>
    <property type="project" value="InterPro"/>
</dbReference>
<dbReference type="GO" id="GO:0003899">
    <property type="term" value="F:DNA-directed RNA polymerase activity"/>
    <property type="evidence" value="ECO:0007669"/>
    <property type="project" value="UniProtKB-EC"/>
</dbReference>
<dbReference type="GO" id="GO:0019083">
    <property type="term" value="P:viral transcription"/>
    <property type="evidence" value="ECO:0007669"/>
    <property type="project" value="InterPro"/>
</dbReference>
<dbReference type="InterPro" id="IPR007937">
    <property type="entry name" value="RNA_Pol_22kDa_poxvir"/>
</dbReference>
<dbReference type="Pfam" id="PF05273">
    <property type="entry name" value="Pox_RNA_Pol_22"/>
    <property type="match status" value="1"/>
</dbReference>
<dbReference type="PIRSF" id="PIRSF000744">
    <property type="entry name" value="RPO22"/>
    <property type="match status" value="1"/>
</dbReference>
<feature type="chain" id="PRO_0000099142" description="DNA-directed RNA polymerase 22 kDa subunit">
    <location>
        <begin position="1"/>
        <end position="186"/>
    </location>
</feature>
<evidence type="ECO:0000250" key="1">
    <source>
        <dbReference type="UniProtKB" id="P68609"/>
    </source>
</evidence>
<evidence type="ECO:0000305" key="2"/>
<proteinExistence type="inferred from homology"/>
<comment type="function">
    <text evidence="1">Part of the DNA-dependent RNA polymerase which catalyzes the transcription of viral DNA into RNA using the four ribonucleoside triphosphates as substrates. Responsible for the transcription of early, intermediate and late genes. DNA-dependent RNA polymerase associates with the early transcription factor (ETF), itself composed of OPG118 and OPG133, thereby allowing the early genes transcription. Late transcription, and probably also intermediate transcription, require newly synthesized RNA polymerase.</text>
</comment>
<comment type="catalytic activity">
    <reaction evidence="1">
        <text>RNA(n) + a ribonucleoside 5'-triphosphate = RNA(n+1) + diphosphate</text>
        <dbReference type="Rhea" id="RHEA:21248"/>
        <dbReference type="Rhea" id="RHEA-COMP:14527"/>
        <dbReference type="Rhea" id="RHEA-COMP:17342"/>
        <dbReference type="ChEBI" id="CHEBI:33019"/>
        <dbReference type="ChEBI" id="CHEBI:61557"/>
        <dbReference type="ChEBI" id="CHEBI:140395"/>
        <dbReference type="EC" id="2.7.7.6"/>
    </reaction>
</comment>
<comment type="subunit">
    <text evidence="1">The DNA-dependent RNA polymerase used for intermediate and late genes expression consists of eight subunits Rpo30/OPG66, Rpo7/OPG90, Rpo22/OPG103, Rpo147/OPG105, Rpo18/OPG119, Rpo19/OPG131, Rpo132/OPG151 and Rpo35/OPG156. The same holoenzyme, with the addition of the transcription-specificity factor OPG109, is used for early gene expression.</text>
</comment>
<comment type="subcellular location">
    <subcellularLocation>
        <location evidence="1">Virion</location>
    </subcellularLocation>
    <text evidence="1">All the enzymes and other proteins required to synthesize early mRNAs are packaged within the virion core along with the DNA genome. This is necessary because viral early mRNAs are synthesized within minutes after virus entry into the cell and are extruded through pores in the core particle.</text>
</comment>
<comment type="similarity">
    <text evidence="2">Belongs to the poxviridae DNA-directed RNA polymerase 22 kDa subunit family.</text>
</comment>
<organism>
    <name type="scientific">Fowlpox virus (strain NVSL)</name>
    <name type="common">FPV</name>
    <dbReference type="NCBI Taxonomy" id="928301"/>
    <lineage>
        <taxon>Viruses</taxon>
        <taxon>Varidnaviria</taxon>
        <taxon>Bamfordvirae</taxon>
        <taxon>Nucleocytoviricota</taxon>
        <taxon>Pokkesviricetes</taxon>
        <taxon>Chitovirales</taxon>
        <taxon>Poxviridae</taxon>
        <taxon>Chordopoxvirinae</taxon>
        <taxon>Avipoxvirus</taxon>
        <taxon>Fowlpox virus</taxon>
    </lineage>
</organism>
<accession>Q85280</accession>